<protein>
    <recommendedName>
        <fullName evidence="1">Adenylosuccinate synthetase</fullName>
        <shortName evidence="1">AMPSase</shortName>
        <shortName evidence="1">AdSS</shortName>
        <ecNumber evidence="1">6.3.4.4</ecNumber>
    </recommendedName>
    <alternativeName>
        <fullName evidence="1">IMP--aspartate ligase</fullName>
    </alternativeName>
</protein>
<organism>
    <name type="scientific">Bordetella pertussis (strain Tohama I / ATCC BAA-589 / NCTC 13251)</name>
    <dbReference type="NCBI Taxonomy" id="257313"/>
    <lineage>
        <taxon>Bacteria</taxon>
        <taxon>Pseudomonadati</taxon>
        <taxon>Pseudomonadota</taxon>
        <taxon>Betaproteobacteria</taxon>
        <taxon>Burkholderiales</taxon>
        <taxon>Alcaligenaceae</taxon>
        <taxon>Bordetella</taxon>
    </lineage>
</organism>
<name>PURA_BORPE</name>
<sequence>MIRKMSKNVVVIGTQWGDEGKGKIVDWLAESVQGVVRFQGGHNAGHTLWINGKKTILRLIPSGIMHDGVTCFIGNGVVLSPEALLREIEELEAAGLDVRSRLQVSEICTLILPYHVAVDKAREARKGEGKIGTTGRGIGPAYEDKVARRALRVQDLFNPALFDEKLAEVLDYHNFVLTQYLGAEPVSANEVRDQAMALAPALAPMVRDVSSNLFALQQEGKNLLFEGAQGALLDVDHGTYPFVTSSNCVAGAASAGAGVGPQALQYVLGITKAYTTRVGSGPFPTELVDEIGARLATIGKEFGSVTGRPRRCGWLDGAALKRSVRLNGISGLCITKLDVLDGLETIQLGVGYRVNGEFRDVLPYGAHAVAQAQAVLEELPGWTESTVGITEYSKLPVNARRYLERVAEVCGVPIDLVSTGPDRNKTIVLRHPFKG</sequence>
<gene>
    <name evidence="1" type="primary">purA</name>
    <name type="synonym">adeK</name>
    <name type="ordered locus">BP2188</name>
</gene>
<feature type="chain" id="PRO_0000095151" description="Adenylosuccinate synthetase">
    <location>
        <begin position="1"/>
        <end position="435"/>
    </location>
</feature>
<feature type="active site" description="Proton acceptor" evidence="1">
    <location>
        <position position="18"/>
    </location>
</feature>
<feature type="active site" description="Proton donor" evidence="1">
    <location>
        <position position="46"/>
    </location>
</feature>
<feature type="binding site" evidence="1">
    <location>
        <begin position="17"/>
        <end position="23"/>
    </location>
    <ligand>
        <name>GTP</name>
        <dbReference type="ChEBI" id="CHEBI:37565"/>
    </ligand>
</feature>
<feature type="binding site" description="in other chain" evidence="1">
    <location>
        <begin position="18"/>
        <end position="21"/>
    </location>
    <ligand>
        <name>IMP</name>
        <dbReference type="ChEBI" id="CHEBI:58053"/>
        <note>ligand shared between dimeric partners</note>
    </ligand>
</feature>
<feature type="binding site" evidence="1">
    <location>
        <position position="18"/>
    </location>
    <ligand>
        <name>Mg(2+)</name>
        <dbReference type="ChEBI" id="CHEBI:18420"/>
    </ligand>
</feature>
<feature type="binding site" description="in other chain" evidence="1">
    <location>
        <begin position="43"/>
        <end position="46"/>
    </location>
    <ligand>
        <name>IMP</name>
        <dbReference type="ChEBI" id="CHEBI:58053"/>
        <note>ligand shared between dimeric partners</note>
    </ligand>
</feature>
<feature type="binding site" evidence="1">
    <location>
        <begin position="45"/>
        <end position="47"/>
    </location>
    <ligand>
        <name>GTP</name>
        <dbReference type="ChEBI" id="CHEBI:37565"/>
    </ligand>
</feature>
<feature type="binding site" evidence="1">
    <location>
        <position position="45"/>
    </location>
    <ligand>
        <name>Mg(2+)</name>
        <dbReference type="ChEBI" id="CHEBI:18420"/>
    </ligand>
</feature>
<feature type="binding site" description="in other chain" evidence="1">
    <location>
        <position position="134"/>
    </location>
    <ligand>
        <name>IMP</name>
        <dbReference type="ChEBI" id="CHEBI:58053"/>
        <note>ligand shared between dimeric partners</note>
    </ligand>
</feature>
<feature type="binding site" evidence="1">
    <location>
        <position position="148"/>
    </location>
    <ligand>
        <name>IMP</name>
        <dbReference type="ChEBI" id="CHEBI:58053"/>
        <note>ligand shared between dimeric partners</note>
    </ligand>
</feature>
<feature type="binding site" description="in other chain" evidence="1">
    <location>
        <position position="229"/>
    </location>
    <ligand>
        <name>IMP</name>
        <dbReference type="ChEBI" id="CHEBI:58053"/>
        <note>ligand shared between dimeric partners</note>
    </ligand>
</feature>
<feature type="binding site" description="in other chain" evidence="1">
    <location>
        <position position="244"/>
    </location>
    <ligand>
        <name>IMP</name>
        <dbReference type="ChEBI" id="CHEBI:58053"/>
        <note>ligand shared between dimeric partners</note>
    </ligand>
</feature>
<feature type="binding site" evidence="1">
    <location>
        <begin position="304"/>
        <end position="310"/>
    </location>
    <ligand>
        <name>substrate</name>
    </ligand>
</feature>
<feature type="binding site" description="in other chain" evidence="1">
    <location>
        <position position="308"/>
    </location>
    <ligand>
        <name>IMP</name>
        <dbReference type="ChEBI" id="CHEBI:58053"/>
        <note>ligand shared between dimeric partners</note>
    </ligand>
</feature>
<feature type="binding site" evidence="1">
    <location>
        <position position="310"/>
    </location>
    <ligand>
        <name>GTP</name>
        <dbReference type="ChEBI" id="CHEBI:37565"/>
    </ligand>
</feature>
<feature type="binding site" evidence="1">
    <location>
        <begin position="336"/>
        <end position="338"/>
    </location>
    <ligand>
        <name>GTP</name>
        <dbReference type="ChEBI" id="CHEBI:37565"/>
    </ligand>
</feature>
<feature type="binding site" evidence="1">
    <location>
        <begin position="418"/>
        <end position="420"/>
    </location>
    <ligand>
        <name>GTP</name>
        <dbReference type="ChEBI" id="CHEBI:37565"/>
    </ligand>
</feature>
<keyword id="KW-0963">Cytoplasm</keyword>
<keyword id="KW-0342">GTP-binding</keyword>
<keyword id="KW-0436">Ligase</keyword>
<keyword id="KW-0460">Magnesium</keyword>
<keyword id="KW-0479">Metal-binding</keyword>
<keyword id="KW-0547">Nucleotide-binding</keyword>
<keyword id="KW-0658">Purine biosynthesis</keyword>
<keyword id="KW-1185">Reference proteome</keyword>
<evidence type="ECO:0000255" key="1">
    <source>
        <dbReference type="HAMAP-Rule" id="MF_00011"/>
    </source>
</evidence>
<accession>Q7VWM1</accession>
<reference key="1">
    <citation type="journal article" date="2003" name="Nat. Genet.">
        <title>Comparative analysis of the genome sequences of Bordetella pertussis, Bordetella parapertussis and Bordetella bronchiseptica.</title>
        <authorList>
            <person name="Parkhill J."/>
            <person name="Sebaihia M."/>
            <person name="Preston A."/>
            <person name="Murphy L.D."/>
            <person name="Thomson N.R."/>
            <person name="Harris D.E."/>
            <person name="Holden M.T.G."/>
            <person name="Churcher C.M."/>
            <person name="Bentley S.D."/>
            <person name="Mungall K.L."/>
            <person name="Cerdeno-Tarraga A.-M."/>
            <person name="Temple L."/>
            <person name="James K.D."/>
            <person name="Harris B."/>
            <person name="Quail M.A."/>
            <person name="Achtman M."/>
            <person name="Atkin R."/>
            <person name="Baker S."/>
            <person name="Basham D."/>
            <person name="Bason N."/>
            <person name="Cherevach I."/>
            <person name="Chillingworth T."/>
            <person name="Collins M."/>
            <person name="Cronin A."/>
            <person name="Davis P."/>
            <person name="Doggett J."/>
            <person name="Feltwell T."/>
            <person name="Goble A."/>
            <person name="Hamlin N."/>
            <person name="Hauser H."/>
            <person name="Holroyd S."/>
            <person name="Jagels K."/>
            <person name="Leather S."/>
            <person name="Moule S."/>
            <person name="Norberczak H."/>
            <person name="O'Neil S."/>
            <person name="Ormond D."/>
            <person name="Price C."/>
            <person name="Rabbinowitsch E."/>
            <person name="Rutter S."/>
            <person name="Sanders M."/>
            <person name="Saunders D."/>
            <person name="Seeger K."/>
            <person name="Sharp S."/>
            <person name="Simmonds M."/>
            <person name="Skelton J."/>
            <person name="Squares R."/>
            <person name="Squares S."/>
            <person name="Stevens K."/>
            <person name="Unwin L."/>
            <person name="Whitehead S."/>
            <person name="Barrell B.G."/>
            <person name="Maskell D.J."/>
        </authorList>
    </citation>
    <scope>NUCLEOTIDE SEQUENCE [LARGE SCALE GENOMIC DNA]</scope>
    <source>
        <strain>Tohama I / ATCC BAA-589 / NCTC 13251</strain>
    </source>
</reference>
<dbReference type="EC" id="6.3.4.4" evidence="1"/>
<dbReference type="EMBL" id="BX640417">
    <property type="protein sequence ID" value="CAE42466.1"/>
    <property type="molecule type" value="Genomic_DNA"/>
</dbReference>
<dbReference type="RefSeq" id="NP_880836.1">
    <property type="nucleotide sequence ID" value="NC_002929.2"/>
</dbReference>
<dbReference type="SMR" id="Q7VWM1"/>
<dbReference type="STRING" id="257313.BP2188"/>
<dbReference type="PaxDb" id="257313-BP2188"/>
<dbReference type="KEGG" id="bpe:BP2188"/>
<dbReference type="PATRIC" id="fig|257313.5.peg.2362"/>
<dbReference type="eggNOG" id="COG0104">
    <property type="taxonomic scope" value="Bacteria"/>
</dbReference>
<dbReference type="HOGENOM" id="CLU_029848_0_0_4"/>
<dbReference type="UniPathway" id="UPA00075">
    <property type="reaction ID" value="UER00335"/>
</dbReference>
<dbReference type="Proteomes" id="UP000002676">
    <property type="component" value="Chromosome"/>
</dbReference>
<dbReference type="GO" id="GO:0005737">
    <property type="term" value="C:cytoplasm"/>
    <property type="evidence" value="ECO:0007669"/>
    <property type="project" value="UniProtKB-SubCell"/>
</dbReference>
<dbReference type="GO" id="GO:0004019">
    <property type="term" value="F:adenylosuccinate synthase activity"/>
    <property type="evidence" value="ECO:0007669"/>
    <property type="project" value="UniProtKB-UniRule"/>
</dbReference>
<dbReference type="GO" id="GO:0005525">
    <property type="term" value="F:GTP binding"/>
    <property type="evidence" value="ECO:0007669"/>
    <property type="project" value="UniProtKB-UniRule"/>
</dbReference>
<dbReference type="GO" id="GO:0000287">
    <property type="term" value="F:magnesium ion binding"/>
    <property type="evidence" value="ECO:0007669"/>
    <property type="project" value="UniProtKB-UniRule"/>
</dbReference>
<dbReference type="GO" id="GO:0044208">
    <property type="term" value="P:'de novo' AMP biosynthetic process"/>
    <property type="evidence" value="ECO:0007669"/>
    <property type="project" value="UniProtKB-UniRule"/>
</dbReference>
<dbReference type="GO" id="GO:0046040">
    <property type="term" value="P:IMP metabolic process"/>
    <property type="evidence" value="ECO:0007669"/>
    <property type="project" value="TreeGrafter"/>
</dbReference>
<dbReference type="CDD" id="cd03108">
    <property type="entry name" value="AdSS"/>
    <property type="match status" value="1"/>
</dbReference>
<dbReference type="FunFam" id="1.10.300.10:FF:000001">
    <property type="entry name" value="Adenylosuccinate synthetase"/>
    <property type="match status" value="1"/>
</dbReference>
<dbReference type="FunFam" id="3.90.170.10:FF:000001">
    <property type="entry name" value="Adenylosuccinate synthetase"/>
    <property type="match status" value="1"/>
</dbReference>
<dbReference type="Gene3D" id="3.40.440.10">
    <property type="entry name" value="Adenylosuccinate Synthetase, subunit A, domain 1"/>
    <property type="match status" value="1"/>
</dbReference>
<dbReference type="Gene3D" id="1.10.300.10">
    <property type="entry name" value="Adenylosuccinate Synthetase, subunit A, domain 2"/>
    <property type="match status" value="1"/>
</dbReference>
<dbReference type="Gene3D" id="3.90.170.10">
    <property type="entry name" value="Adenylosuccinate Synthetase, subunit A, domain 3"/>
    <property type="match status" value="1"/>
</dbReference>
<dbReference type="HAMAP" id="MF_00011">
    <property type="entry name" value="Adenylosucc_synth"/>
    <property type="match status" value="1"/>
</dbReference>
<dbReference type="InterPro" id="IPR018220">
    <property type="entry name" value="Adenylosuccin_syn_GTP-bd"/>
</dbReference>
<dbReference type="InterPro" id="IPR033128">
    <property type="entry name" value="Adenylosuccin_syn_Lys_AS"/>
</dbReference>
<dbReference type="InterPro" id="IPR042109">
    <property type="entry name" value="Adenylosuccinate_synth_dom1"/>
</dbReference>
<dbReference type="InterPro" id="IPR042110">
    <property type="entry name" value="Adenylosuccinate_synth_dom2"/>
</dbReference>
<dbReference type="InterPro" id="IPR042111">
    <property type="entry name" value="Adenylosuccinate_synth_dom3"/>
</dbReference>
<dbReference type="InterPro" id="IPR001114">
    <property type="entry name" value="Adenylosuccinate_synthetase"/>
</dbReference>
<dbReference type="InterPro" id="IPR027417">
    <property type="entry name" value="P-loop_NTPase"/>
</dbReference>
<dbReference type="NCBIfam" id="NF002223">
    <property type="entry name" value="PRK01117.1"/>
    <property type="match status" value="1"/>
</dbReference>
<dbReference type="NCBIfam" id="TIGR00184">
    <property type="entry name" value="purA"/>
    <property type="match status" value="1"/>
</dbReference>
<dbReference type="PANTHER" id="PTHR11846">
    <property type="entry name" value="ADENYLOSUCCINATE SYNTHETASE"/>
    <property type="match status" value="1"/>
</dbReference>
<dbReference type="PANTHER" id="PTHR11846:SF0">
    <property type="entry name" value="ADENYLOSUCCINATE SYNTHETASE"/>
    <property type="match status" value="1"/>
</dbReference>
<dbReference type="Pfam" id="PF00709">
    <property type="entry name" value="Adenylsucc_synt"/>
    <property type="match status" value="1"/>
</dbReference>
<dbReference type="SMART" id="SM00788">
    <property type="entry name" value="Adenylsucc_synt"/>
    <property type="match status" value="1"/>
</dbReference>
<dbReference type="SUPFAM" id="SSF52540">
    <property type="entry name" value="P-loop containing nucleoside triphosphate hydrolases"/>
    <property type="match status" value="1"/>
</dbReference>
<dbReference type="PROSITE" id="PS01266">
    <property type="entry name" value="ADENYLOSUCCIN_SYN_1"/>
    <property type="match status" value="1"/>
</dbReference>
<dbReference type="PROSITE" id="PS00513">
    <property type="entry name" value="ADENYLOSUCCIN_SYN_2"/>
    <property type="match status" value="1"/>
</dbReference>
<proteinExistence type="inferred from homology"/>
<comment type="function">
    <text evidence="1">Plays an important role in the de novo pathway of purine nucleotide biosynthesis. Catalyzes the first committed step in the biosynthesis of AMP from IMP.</text>
</comment>
<comment type="catalytic activity">
    <reaction evidence="1">
        <text>IMP + L-aspartate + GTP = N(6)-(1,2-dicarboxyethyl)-AMP + GDP + phosphate + 2 H(+)</text>
        <dbReference type="Rhea" id="RHEA:15753"/>
        <dbReference type="ChEBI" id="CHEBI:15378"/>
        <dbReference type="ChEBI" id="CHEBI:29991"/>
        <dbReference type="ChEBI" id="CHEBI:37565"/>
        <dbReference type="ChEBI" id="CHEBI:43474"/>
        <dbReference type="ChEBI" id="CHEBI:57567"/>
        <dbReference type="ChEBI" id="CHEBI:58053"/>
        <dbReference type="ChEBI" id="CHEBI:58189"/>
        <dbReference type="EC" id="6.3.4.4"/>
    </reaction>
</comment>
<comment type="cofactor">
    <cofactor evidence="1">
        <name>Mg(2+)</name>
        <dbReference type="ChEBI" id="CHEBI:18420"/>
    </cofactor>
    <text evidence="1">Binds 1 Mg(2+) ion per subunit.</text>
</comment>
<comment type="pathway">
    <text evidence="1">Purine metabolism; AMP biosynthesis via de novo pathway; AMP from IMP: step 1/2.</text>
</comment>
<comment type="subunit">
    <text evidence="1">Homodimer.</text>
</comment>
<comment type="subcellular location">
    <subcellularLocation>
        <location evidence="1">Cytoplasm</location>
    </subcellularLocation>
</comment>
<comment type="similarity">
    <text evidence="1">Belongs to the adenylosuccinate synthetase family.</text>
</comment>